<reference key="1">
    <citation type="journal article" date="1999" name="Nature">
        <title>Sequence and analysis of chromosome 2 of the plant Arabidopsis thaliana.</title>
        <authorList>
            <person name="Lin X."/>
            <person name="Kaul S."/>
            <person name="Rounsley S.D."/>
            <person name="Shea T.P."/>
            <person name="Benito M.-I."/>
            <person name="Town C.D."/>
            <person name="Fujii C.Y."/>
            <person name="Mason T.M."/>
            <person name="Bowman C.L."/>
            <person name="Barnstead M.E."/>
            <person name="Feldblyum T.V."/>
            <person name="Buell C.R."/>
            <person name="Ketchum K.A."/>
            <person name="Lee J.J."/>
            <person name="Ronning C.M."/>
            <person name="Koo H.L."/>
            <person name="Moffat K.S."/>
            <person name="Cronin L.A."/>
            <person name="Shen M."/>
            <person name="Pai G."/>
            <person name="Van Aken S."/>
            <person name="Umayam L."/>
            <person name="Tallon L.J."/>
            <person name="Gill J.E."/>
            <person name="Adams M.D."/>
            <person name="Carrera A.J."/>
            <person name="Creasy T.H."/>
            <person name="Goodman H.M."/>
            <person name="Somerville C.R."/>
            <person name="Copenhaver G.P."/>
            <person name="Preuss D."/>
            <person name="Nierman W.C."/>
            <person name="White O."/>
            <person name="Eisen J.A."/>
            <person name="Salzberg S.L."/>
            <person name="Fraser C.M."/>
            <person name="Venter J.C."/>
        </authorList>
    </citation>
    <scope>NUCLEOTIDE SEQUENCE [LARGE SCALE GENOMIC DNA]</scope>
    <source>
        <strain>cv. Columbia</strain>
    </source>
</reference>
<reference key="2">
    <citation type="journal article" date="2017" name="Plant J.">
        <title>Araport11: a complete reannotation of the Arabidopsis thaliana reference genome.</title>
        <authorList>
            <person name="Cheng C.Y."/>
            <person name="Krishnakumar V."/>
            <person name="Chan A.P."/>
            <person name="Thibaud-Nissen F."/>
            <person name="Schobel S."/>
            <person name="Town C.D."/>
        </authorList>
    </citation>
    <scope>GENOME REANNOTATION</scope>
    <source>
        <strain>cv. Columbia</strain>
    </source>
</reference>
<reference key="3">
    <citation type="journal article" date="2005" name="Plant Physiol.">
        <title>Genome organization of more than 300 defensin-like genes in Arabidopsis.</title>
        <authorList>
            <person name="Silverstein K.A.T."/>
            <person name="Graham M.A."/>
            <person name="Paape T.D."/>
            <person name="VandenBosch K.A."/>
        </authorList>
    </citation>
    <scope>GENE FAMILY</scope>
</reference>
<proteinExistence type="inferred from homology"/>
<feature type="signal peptide" evidence="2">
    <location>
        <begin position="1"/>
        <end position="25"/>
    </location>
</feature>
<feature type="chain" id="PRO_0000379640" description="Putative defensin-like protein 60">
    <location>
        <begin position="26"/>
        <end position="77"/>
    </location>
</feature>
<feature type="disulfide bond" evidence="1">
    <location>
        <begin position="41"/>
        <end position="75"/>
    </location>
</feature>
<feature type="disulfide bond" evidence="1">
    <location>
        <begin position="45"/>
        <end position="68"/>
    </location>
</feature>
<feature type="disulfide bond" evidence="1">
    <location>
        <begin position="54"/>
        <end position="73"/>
    </location>
</feature>
<feature type="disulfide bond" evidence="1">
    <location>
        <begin position="58"/>
        <end position="74"/>
    </location>
</feature>
<dbReference type="EMBL" id="AC007167">
    <property type="status" value="NOT_ANNOTATED_CDS"/>
    <property type="molecule type" value="Genomic_DNA"/>
</dbReference>
<dbReference type="EMBL" id="CP002685">
    <property type="protein sequence ID" value="AEC05774.1"/>
    <property type="molecule type" value="Genomic_DNA"/>
</dbReference>
<dbReference type="RefSeq" id="NP_001031314.1">
    <property type="nucleotide sequence ID" value="NM_001036237.2"/>
</dbReference>
<dbReference type="SMR" id="Q2V4A5"/>
<dbReference type="PaxDb" id="3702-AT2G03955.1"/>
<dbReference type="ProteomicsDB" id="224177"/>
<dbReference type="EnsemblPlants" id="AT2G03955.1">
    <property type="protein sequence ID" value="AT2G03955.1"/>
    <property type="gene ID" value="AT2G03955"/>
</dbReference>
<dbReference type="GeneID" id="3768064"/>
<dbReference type="Gramene" id="AT2G03955.1">
    <property type="protein sequence ID" value="AT2G03955.1"/>
    <property type="gene ID" value="AT2G03955"/>
</dbReference>
<dbReference type="KEGG" id="ath:AT2G03955"/>
<dbReference type="Araport" id="AT2G03955"/>
<dbReference type="TAIR" id="AT2G03955"/>
<dbReference type="HOGENOM" id="CLU_165205_2_0_1"/>
<dbReference type="InParanoid" id="Q2V4A5"/>
<dbReference type="PhylomeDB" id="Q2V4A5"/>
<dbReference type="PRO" id="PR:Q2V4A5"/>
<dbReference type="Proteomes" id="UP000006548">
    <property type="component" value="Chromosome 2"/>
</dbReference>
<dbReference type="ExpressionAtlas" id="Q2V4A5">
    <property type="expression patterns" value="baseline and differential"/>
</dbReference>
<dbReference type="GO" id="GO:0005576">
    <property type="term" value="C:extracellular region"/>
    <property type="evidence" value="ECO:0007669"/>
    <property type="project" value="UniProtKB-SubCell"/>
</dbReference>
<dbReference type="GO" id="GO:0050832">
    <property type="term" value="P:defense response to fungus"/>
    <property type="evidence" value="ECO:0007669"/>
    <property type="project" value="UniProtKB-KW"/>
</dbReference>
<dbReference type="GO" id="GO:0031640">
    <property type="term" value="P:killing of cells of another organism"/>
    <property type="evidence" value="ECO:0007669"/>
    <property type="project" value="UniProtKB-KW"/>
</dbReference>
<dbReference type="InterPro" id="IPR056373">
    <property type="entry name" value="Defensin-like_dom"/>
</dbReference>
<dbReference type="Pfam" id="PF24552">
    <property type="entry name" value="Defensin"/>
    <property type="match status" value="1"/>
</dbReference>
<sequence>MKMNITKSYVILFLVVVMTNSLSNSEVLVAPVIETAQNDVCFVPCTSRYGHYECAFDCMHKRYKDGGCVHGRCCCKT</sequence>
<evidence type="ECO:0000250" key="1"/>
<evidence type="ECO:0000255" key="2"/>
<evidence type="ECO:0000305" key="3"/>
<name>DEF60_ARATH</name>
<organism>
    <name type="scientific">Arabidopsis thaliana</name>
    <name type="common">Mouse-ear cress</name>
    <dbReference type="NCBI Taxonomy" id="3702"/>
    <lineage>
        <taxon>Eukaryota</taxon>
        <taxon>Viridiplantae</taxon>
        <taxon>Streptophyta</taxon>
        <taxon>Embryophyta</taxon>
        <taxon>Tracheophyta</taxon>
        <taxon>Spermatophyta</taxon>
        <taxon>Magnoliopsida</taxon>
        <taxon>eudicotyledons</taxon>
        <taxon>Gunneridae</taxon>
        <taxon>Pentapetalae</taxon>
        <taxon>rosids</taxon>
        <taxon>malvids</taxon>
        <taxon>Brassicales</taxon>
        <taxon>Brassicaceae</taxon>
        <taxon>Camelineae</taxon>
        <taxon>Arabidopsis</taxon>
    </lineage>
</organism>
<accession>Q2V4A5</accession>
<gene>
    <name type="ordered locus">At2g03955</name>
    <name type="ORF">F3C11</name>
</gene>
<comment type="subcellular location">
    <subcellularLocation>
        <location evidence="1">Secreted</location>
    </subcellularLocation>
</comment>
<comment type="similarity">
    <text evidence="3">Belongs to the DEFL family.</text>
</comment>
<protein>
    <recommendedName>
        <fullName>Putative defensin-like protein 60</fullName>
    </recommendedName>
</protein>
<keyword id="KW-0929">Antimicrobial</keyword>
<keyword id="KW-1015">Disulfide bond</keyword>
<keyword id="KW-0295">Fungicide</keyword>
<keyword id="KW-0611">Plant defense</keyword>
<keyword id="KW-1185">Reference proteome</keyword>
<keyword id="KW-0964">Secreted</keyword>
<keyword id="KW-0732">Signal</keyword>